<evidence type="ECO:0000250" key="1"/>
<evidence type="ECO:0000250" key="2">
    <source>
        <dbReference type="UniProtKB" id="P53779"/>
    </source>
</evidence>
<evidence type="ECO:0000250" key="3">
    <source>
        <dbReference type="UniProtKB" id="Q61831"/>
    </source>
</evidence>
<evidence type="ECO:0000255" key="4">
    <source>
        <dbReference type="PROSITE-ProRule" id="PRU00159"/>
    </source>
</evidence>
<evidence type="ECO:0000255" key="5">
    <source>
        <dbReference type="PROSITE-ProRule" id="PRU10027"/>
    </source>
</evidence>
<evidence type="ECO:0000256" key="6">
    <source>
        <dbReference type="SAM" id="MobiDB-lite"/>
    </source>
</evidence>
<evidence type="ECO:0000269" key="7">
    <source>
    </source>
</evidence>
<evidence type="ECO:0000269" key="8">
    <source>
    </source>
</evidence>
<evidence type="ECO:0000269" key="9">
    <source>
    </source>
</evidence>
<evidence type="ECO:0000305" key="10"/>
<sequence length="464" mass="52532">MSLHFLYYCSEPTLDVKIAFCQGFDKHVDVSSVVKHYNMSKSKVDNQFYSVEVGDSTFTVLKRYQNLKPIGSGAQGIVCAAYDAVLDRNVAIKKLSRPFQNQTHAKRAYRELVLMKCVNHKNIISLLNVFTPQKTLEEFQDVYLVMELMDANLCQVIQMELDHERMSYLLYQMLCGIKHLHSAGIIHRDLKPSNIVVKSDCTLKILDFGLARTAGTSFMMTPYVVTRYYRAPEVILGMGYKENVDIWSVGCIMGEMVRHKILFPGRDYIDQWNKVIEQLGTPCPEFMKKLQPTVRNYVENRPKYAGLTFPKLFPDSLFPADSEHNKLKASQARDLLSKMLVIDPAKRISVDDALQHPYINVWYDPAEVEAPPPQIYDKQLDEREHTIEEWKELIYKEVMNSEEKTKNGVVKGQPSPSGAAVNSSESLPPSSSVNDISSMSTDQTLASDTDSSLEASAGPLGCCR</sequence>
<protein>
    <recommendedName>
        <fullName>Mitogen-activated protein kinase 10</fullName>
        <shortName>MAP kinase 10</shortName>
        <shortName>MAPK 10</shortName>
        <ecNumber>2.7.11.24</ecNumber>
    </recommendedName>
    <alternativeName>
        <fullName>SAPK-beta</fullName>
    </alternativeName>
    <alternativeName>
        <fullName>Stress-activated protein kinase JNK3</fullName>
    </alternativeName>
    <alternativeName>
        <fullName>c-Jun N-terminal kinase 3</fullName>
    </alternativeName>
    <alternativeName>
        <fullName>p54-beta</fullName>
    </alternativeName>
</protein>
<organism>
    <name type="scientific">Rattus norvegicus</name>
    <name type="common">Rat</name>
    <dbReference type="NCBI Taxonomy" id="10116"/>
    <lineage>
        <taxon>Eukaryota</taxon>
        <taxon>Metazoa</taxon>
        <taxon>Chordata</taxon>
        <taxon>Craniata</taxon>
        <taxon>Vertebrata</taxon>
        <taxon>Euteleostomi</taxon>
        <taxon>Mammalia</taxon>
        <taxon>Eutheria</taxon>
        <taxon>Euarchontoglires</taxon>
        <taxon>Glires</taxon>
        <taxon>Rodentia</taxon>
        <taxon>Myomorpha</taxon>
        <taxon>Muroidea</taxon>
        <taxon>Muridae</taxon>
        <taxon>Murinae</taxon>
        <taxon>Rattus</taxon>
    </lineage>
</organism>
<comment type="function">
    <text evidence="3 7 8">Serine/threonine-protein kinase involved in various processes such as neuronal proliferation, differentiation, migration and programmed cell death. Extracellular stimuli such as pro-inflammatory cytokines or physical stress stimulate the stress-activated protein kinase/c-Jun N-terminal kinase (SAP/JNK) signaling pathway. In this cascade, two dual specificity kinases MAP2K4/MKK4 and MAP2K7/MKK7 phosphorylate and activate MAPK10/JNK3. In turn, MAPK10/JNK3 phosphorylates a number of transcription factors, primarily components of AP-1 such as JUN and ATF2 and thus regulates AP-1 transcriptional activity. Plays regulatory roles in the signaling pathways during neuronal apoptosis. Phosphorylates the neuronal microtubule regulator STMN2. Acts in the regulation of the amyloid-beta precursor protein/APP signaling during neuronal differentiation by phosphorylating APP. Also participates in neurite growth in spiral ganglion neurons. Phosphorylates the CLOCK-BMAL1 heterodimer and plays a role in the photic regulation of the circadian clock (By similarity). Phosphorylates JUND and this phosphorylation is inhibited in the presence of MEN1 (By similarity).</text>
</comment>
<comment type="catalytic activity">
    <reaction>
        <text>L-seryl-[protein] + ATP = O-phospho-L-seryl-[protein] + ADP + H(+)</text>
        <dbReference type="Rhea" id="RHEA:17989"/>
        <dbReference type="Rhea" id="RHEA-COMP:9863"/>
        <dbReference type="Rhea" id="RHEA-COMP:11604"/>
        <dbReference type="ChEBI" id="CHEBI:15378"/>
        <dbReference type="ChEBI" id="CHEBI:29999"/>
        <dbReference type="ChEBI" id="CHEBI:30616"/>
        <dbReference type="ChEBI" id="CHEBI:83421"/>
        <dbReference type="ChEBI" id="CHEBI:456216"/>
        <dbReference type="EC" id="2.7.11.24"/>
    </reaction>
</comment>
<comment type="catalytic activity">
    <reaction>
        <text>L-threonyl-[protein] + ATP = O-phospho-L-threonyl-[protein] + ADP + H(+)</text>
        <dbReference type="Rhea" id="RHEA:46608"/>
        <dbReference type="Rhea" id="RHEA-COMP:11060"/>
        <dbReference type="Rhea" id="RHEA-COMP:11605"/>
        <dbReference type="ChEBI" id="CHEBI:15378"/>
        <dbReference type="ChEBI" id="CHEBI:30013"/>
        <dbReference type="ChEBI" id="CHEBI:30616"/>
        <dbReference type="ChEBI" id="CHEBI:61977"/>
        <dbReference type="ChEBI" id="CHEBI:456216"/>
        <dbReference type="EC" id="2.7.11.24"/>
    </reaction>
</comment>
<comment type="cofactor">
    <cofactor evidence="1">
        <name>Mg(2+)</name>
        <dbReference type="ChEBI" id="CHEBI:18420"/>
    </cofactor>
</comment>
<comment type="activity regulation">
    <text evidence="1">Activated by threonine and tyrosine phosphorylation by two dual specificity kinases, MAP2K4 and MAP2K7. MAP2K7 phosphorylates MAPK10 on Thr-221 causing a conformational change and a large increase in Vmax for the enzyme. MAP2K4 then phosphorylates Tyr-223 resulting in a further increase in Vmax. Inhibited by dual specificity phosphatases, such as DUSP1. Inhibited by HDAC9 (By similarity).</text>
</comment>
<comment type="subunit">
    <text evidence="2 3 9">Interacts with MAPK8IP1/JIP-1 and MAPK8IP3/JIP-3/JSAP1 (PubMed:21076496). Interacts with SPAG9/MAPK8IP4/JIP4 (By similarity). Interacts with HDAC9 and MAPKBP1 (By similarity). Interacts with ARRB2; the interaction enhances MAPK10 activation by MAP3K5 (By similarity). Interacts with SARM1 (By similarity). Interacts with JUND; interaction is inhibited in the presence of MEN1 (By similarity).</text>
</comment>
<comment type="interaction">
    <interactant intactId="EBI-7155513">
        <id>P49187</id>
    </interactant>
    <interactant intactId="EBI-540118">
        <id>P50232</id>
        <label>Syt4</label>
    </interactant>
    <organismsDiffer>false</organismsDiffer>
    <experiments>2</experiments>
</comment>
<comment type="subcellular location">
    <subcellularLocation>
        <location>Cytoplasm</location>
    </subcellularLocation>
    <subcellularLocation>
        <location>Membrane</location>
        <topology>Lipid-anchor</topology>
    </subcellularLocation>
    <subcellularLocation>
        <location>Nucleus</location>
    </subcellularLocation>
    <subcellularLocation>
        <location>Mitochondrion</location>
    </subcellularLocation>
    <text evidence="1">Palmitoylation regulates MAPK10 trafficking to cytoskeleton. Recruited to the mitochondria in the presence of SARM1.</text>
</comment>
<comment type="alternative products">
    <event type="alternative splicing"/>
    <isoform>
        <id>P49187-1</id>
        <name>1</name>
        <sequence type="displayed"/>
    </isoform>
    <isoform>
        <id>P49187-2</id>
        <name>2</name>
        <sequence type="described" ref="VSP_059665"/>
    </isoform>
</comment>
<comment type="domain">
    <text>The TXY motif contains the threonine and tyrosine residues whose phosphorylation activates the MAP kinases.</text>
</comment>
<comment type="PTM">
    <text evidence="1">Dually phosphorylated on Thr-221 and Tyr-223 by MAP2K4 and MAP2K7, which activates the enzyme. MAP2K7 shows a strong preference for Thr-221 while MAP2K4 phosphorylates Tyr-223 preferentially. Weakly autophosphorylated on threonine and tyrosine residues in vitro (By similarity).</text>
</comment>
<comment type="PTM">
    <text evidence="1">Palmitoylation regulates subcellular location and axonal development.</text>
</comment>
<comment type="similarity">
    <text evidence="10">Belongs to the protein kinase superfamily. CMGC Ser/Thr protein kinase family. MAP kinase subfamily.</text>
</comment>
<comment type="sequence caution" evidence="10">
    <conflict type="frameshift">
        <sequence resource="EMBL-CDS" id="AAA42110"/>
    </conflict>
</comment>
<reference key="1">
    <citation type="journal article" date="1994" name="Nature">
        <title>The stress-activated protein kinase subfamily of c-Jun kinases.</title>
        <authorList>
            <person name="Kyriakis J.M."/>
            <person name="Banerjee P."/>
            <person name="Nikolakaki E."/>
            <person name="Dai T."/>
            <person name="Rubie E.A."/>
            <person name="Ahmad M.F."/>
            <person name="Avruch J."/>
            <person name="Woodgett J.R."/>
        </authorList>
    </citation>
    <scope>NUCLEOTIDE SEQUENCE [MRNA] (ISOFORM 1)</scope>
    <source>
        <tissue>Brain</tissue>
    </source>
</reference>
<reference key="2">
    <citation type="journal article" date="2010" name="Can. J. Physiol. Pharmacol.">
        <title>Regulation of stress-associated scaffold proteins JIP1 and JIP3 on the c-Jun NH2-terminal kinase in ischemia-reperfusion.</title>
        <authorList>
            <person name="Xu B."/>
            <person name="Zhou Y."/>
            <person name="Karmin O."/>
            <person name="Choy P.C."/>
            <person name="Pierce G.N."/>
            <person name="Siow Y.L."/>
        </authorList>
    </citation>
    <scope>NUCLEOTIDE SEQUENCE [MRNA] (ISOFORM 2)</scope>
    <scope>INTERACTION WITH MAPK8IP1 AND MAPK8IP3</scope>
    <source>
        <strain>Sprague-Dawley</strain>
        <tissue>Heart</tissue>
    </source>
</reference>
<reference key="3">
    <citation type="journal article" date="2004" name="Nature">
        <title>Genome sequence of the Brown Norway rat yields insights into mammalian evolution.</title>
        <authorList>
            <person name="Gibbs R.A."/>
            <person name="Weinstock G.M."/>
            <person name="Metzker M.L."/>
            <person name="Muzny D.M."/>
            <person name="Sodergren E.J."/>
            <person name="Scherer S."/>
            <person name="Scott G."/>
            <person name="Steffen D."/>
            <person name="Worley K.C."/>
            <person name="Burch P.E."/>
            <person name="Okwuonu G."/>
            <person name="Hines S."/>
            <person name="Lewis L."/>
            <person name="Deramo C."/>
            <person name="Delgado O."/>
            <person name="Dugan-Rocha S."/>
            <person name="Miner G."/>
            <person name="Morgan M."/>
            <person name="Hawes A."/>
            <person name="Gill R."/>
            <person name="Holt R.A."/>
            <person name="Adams M.D."/>
            <person name="Amanatides P.G."/>
            <person name="Baden-Tillson H."/>
            <person name="Barnstead M."/>
            <person name="Chin S."/>
            <person name="Evans C.A."/>
            <person name="Ferriera S."/>
            <person name="Fosler C."/>
            <person name="Glodek A."/>
            <person name="Gu Z."/>
            <person name="Jennings D."/>
            <person name="Kraft C.L."/>
            <person name="Nguyen T."/>
            <person name="Pfannkoch C.M."/>
            <person name="Sitter C."/>
            <person name="Sutton G.G."/>
            <person name="Venter J.C."/>
            <person name="Woodage T."/>
            <person name="Smith D."/>
            <person name="Lee H.-M."/>
            <person name="Gustafson E."/>
            <person name="Cahill P."/>
            <person name="Kana A."/>
            <person name="Doucette-Stamm L."/>
            <person name="Weinstock K."/>
            <person name="Fechtel K."/>
            <person name="Weiss R.B."/>
            <person name="Dunn D.M."/>
            <person name="Green E.D."/>
            <person name="Blakesley R.W."/>
            <person name="Bouffard G.G."/>
            <person name="De Jong P.J."/>
            <person name="Osoegawa K."/>
            <person name="Zhu B."/>
            <person name="Marra M."/>
            <person name="Schein J."/>
            <person name="Bosdet I."/>
            <person name="Fjell C."/>
            <person name="Jones S."/>
            <person name="Krzywinski M."/>
            <person name="Mathewson C."/>
            <person name="Siddiqui A."/>
            <person name="Wye N."/>
            <person name="McPherson J."/>
            <person name="Zhao S."/>
            <person name="Fraser C.M."/>
            <person name="Shetty J."/>
            <person name="Shatsman S."/>
            <person name="Geer K."/>
            <person name="Chen Y."/>
            <person name="Abramzon S."/>
            <person name="Nierman W.C."/>
            <person name="Havlak P.H."/>
            <person name="Chen R."/>
            <person name="Durbin K.J."/>
            <person name="Egan A."/>
            <person name="Ren Y."/>
            <person name="Song X.-Z."/>
            <person name="Li B."/>
            <person name="Liu Y."/>
            <person name="Qin X."/>
            <person name="Cawley S."/>
            <person name="Cooney A.J."/>
            <person name="D'Souza L.M."/>
            <person name="Martin K."/>
            <person name="Wu J.Q."/>
            <person name="Gonzalez-Garay M.L."/>
            <person name="Jackson A.R."/>
            <person name="Kalafus K.J."/>
            <person name="McLeod M.P."/>
            <person name="Milosavljevic A."/>
            <person name="Virk D."/>
            <person name="Volkov A."/>
            <person name="Wheeler D.A."/>
            <person name="Zhang Z."/>
            <person name="Bailey J.A."/>
            <person name="Eichler E.E."/>
            <person name="Tuzun E."/>
            <person name="Birney E."/>
            <person name="Mongin E."/>
            <person name="Ureta-Vidal A."/>
            <person name="Woodwark C."/>
            <person name="Zdobnov E."/>
            <person name="Bork P."/>
            <person name="Suyama M."/>
            <person name="Torrents D."/>
            <person name="Alexandersson M."/>
            <person name="Trask B.J."/>
            <person name="Young J.M."/>
            <person name="Huang H."/>
            <person name="Wang H."/>
            <person name="Xing H."/>
            <person name="Daniels S."/>
            <person name="Gietzen D."/>
            <person name="Schmidt J."/>
            <person name="Stevens K."/>
            <person name="Vitt U."/>
            <person name="Wingrove J."/>
            <person name="Camara F."/>
            <person name="Mar Alba M."/>
            <person name="Abril J.F."/>
            <person name="Guigo R."/>
            <person name="Smit A."/>
            <person name="Dubchak I."/>
            <person name="Rubin E.M."/>
            <person name="Couronne O."/>
            <person name="Poliakov A."/>
            <person name="Huebner N."/>
            <person name="Ganten D."/>
            <person name="Goesele C."/>
            <person name="Hummel O."/>
            <person name="Kreitler T."/>
            <person name="Lee Y.-A."/>
            <person name="Monti J."/>
            <person name="Schulz H."/>
            <person name="Zimdahl H."/>
            <person name="Himmelbauer H."/>
            <person name="Lehrach H."/>
            <person name="Jacob H.J."/>
            <person name="Bromberg S."/>
            <person name="Gullings-Handley J."/>
            <person name="Jensen-Seaman M.I."/>
            <person name="Kwitek A.E."/>
            <person name="Lazar J."/>
            <person name="Pasko D."/>
            <person name="Tonellato P.J."/>
            <person name="Twigger S."/>
            <person name="Ponting C.P."/>
            <person name="Duarte J.M."/>
            <person name="Rice S."/>
            <person name="Goodstadt L."/>
            <person name="Beatson S.A."/>
            <person name="Emes R.D."/>
            <person name="Winter E.E."/>
            <person name="Webber C."/>
            <person name="Brandt P."/>
            <person name="Nyakatura G."/>
            <person name="Adetobi M."/>
            <person name="Chiaromonte F."/>
            <person name="Elnitski L."/>
            <person name="Eswara P."/>
            <person name="Hardison R.C."/>
            <person name="Hou M."/>
            <person name="Kolbe D."/>
            <person name="Makova K."/>
            <person name="Miller W."/>
            <person name="Nekrutenko A."/>
            <person name="Riemer C."/>
            <person name="Schwartz S."/>
            <person name="Taylor J."/>
            <person name="Yang S."/>
            <person name="Zhang Y."/>
            <person name="Lindpaintner K."/>
            <person name="Andrews T.D."/>
            <person name="Caccamo M."/>
            <person name="Clamp M."/>
            <person name="Clarke L."/>
            <person name="Curwen V."/>
            <person name="Durbin R.M."/>
            <person name="Eyras E."/>
            <person name="Searle S.M."/>
            <person name="Cooper G.M."/>
            <person name="Batzoglou S."/>
            <person name="Brudno M."/>
            <person name="Sidow A."/>
            <person name="Stone E.A."/>
            <person name="Payseur B.A."/>
            <person name="Bourque G."/>
            <person name="Lopez-Otin C."/>
            <person name="Puente X.S."/>
            <person name="Chakrabarti K."/>
            <person name="Chatterji S."/>
            <person name="Dewey C."/>
            <person name="Pachter L."/>
            <person name="Bray N."/>
            <person name="Yap V.B."/>
            <person name="Caspi A."/>
            <person name="Tesler G."/>
            <person name="Pevzner P.A."/>
            <person name="Haussler D."/>
            <person name="Roskin K.M."/>
            <person name="Baertsch R."/>
            <person name="Clawson H."/>
            <person name="Furey T.S."/>
            <person name="Hinrichs A.S."/>
            <person name="Karolchik D."/>
            <person name="Kent W.J."/>
            <person name="Rosenbloom K.R."/>
            <person name="Trumbower H."/>
            <person name="Weirauch M."/>
            <person name="Cooper D.N."/>
            <person name="Stenson P.D."/>
            <person name="Ma B."/>
            <person name="Brent M."/>
            <person name="Arumugam M."/>
            <person name="Shteynberg D."/>
            <person name="Copley R.R."/>
            <person name="Taylor M.S."/>
            <person name="Riethman H."/>
            <person name="Mudunuri U."/>
            <person name="Peterson J."/>
            <person name="Guyer M."/>
            <person name="Felsenfeld A."/>
            <person name="Old S."/>
            <person name="Mockrin S."/>
            <person name="Collins F.S."/>
        </authorList>
    </citation>
    <scope>NUCLEOTIDE SEQUENCE [LARGE SCALE GENOMIC DNA]</scope>
    <source>
        <strain>Brown Norway</strain>
    </source>
</reference>
<reference key="4">
    <citation type="submission" date="2005-07" db="EMBL/GenBank/DDBJ databases">
        <authorList>
            <person name="Mural R.J."/>
            <person name="Adams M.D."/>
            <person name="Myers E.W."/>
            <person name="Smith H.O."/>
            <person name="Venter J.C."/>
        </authorList>
    </citation>
    <scope>NUCLEOTIDE SEQUENCE [LARGE SCALE GENOMIC DNA]</scope>
    <source>
        <strain>Brown Norway</strain>
    </source>
</reference>
<reference key="5">
    <citation type="unpublished observations" date="1997-03">
        <authorList>
            <person name="Hulo-Demole C."/>
            <person name="Braconi-Quintaje S."/>
        </authorList>
    </citation>
    <scope>IDENTIFICATION OF PROBABLE FRAMESHIFT</scope>
</reference>
<reference key="6">
    <citation type="journal article" date="2000" name="Science">
        <title>Beta-arrestin 2: a receptor-regulated MAPK scaffold for the activation of JNK3.</title>
        <authorList>
            <person name="McDonald P.H."/>
            <person name="Chow C.W."/>
            <person name="Miller W.E."/>
            <person name="Laporte S.A."/>
            <person name="Field M.E."/>
            <person name="Lin F.-T."/>
            <person name="Davis R.J."/>
            <person name="Lefkowitz R.J."/>
        </authorList>
    </citation>
    <scope>INTERACTION WITH ARRB2</scope>
</reference>
<reference key="7">
    <citation type="journal article" date="2002" name="J. Neurosci. Res.">
        <title>JNK3 contributes to c-jun induction and apoptosis in 4-hydroxynonenal-treated sympathetic neurons.</title>
        <authorList>
            <person name="Bruckner S.R."/>
            <person name="Estus S."/>
        </authorList>
    </citation>
    <scope>FUNCTION</scope>
</reference>
<reference key="8">
    <citation type="journal article" date="2005" name="J. Neurosci.">
        <title>Physiological regulation of the beta-amyloid precursor protein signaling domain by c-Jun N-terminal kinase JNK3 during neuronal differentiation.</title>
        <authorList>
            <person name="Kimberly W.T."/>
            <person name="Zheng J.B."/>
            <person name="Town T."/>
            <person name="Flavell R.A."/>
            <person name="Selkoe D.J."/>
        </authorList>
    </citation>
    <scope>FUNCTION IN PHOSPHORYLATION OF APP</scope>
</reference>
<reference key="9">
    <citation type="journal article" date="2008" name="J. Biol. Chem.">
        <title>The beta-arrestin-2 scaffold protein promotes c-Jun N-terminal kinase-3 activation by binding to its nonconserved N terminus.</title>
        <authorList>
            <person name="Guo C."/>
            <person name="Whitmarsh A.J."/>
        </authorList>
    </citation>
    <scope>INTERACTION WITH ARRB2</scope>
</reference>
<name>MK10_RAT</name>
<keyword id="KW-0025">Alternative splicing</keyword>
<keyword id="KW-0067">ATP-binding</keyword>
<keyword id="KW-0090">Biological rhythms</keyword>
<keyword id="KW-0963">Cytoplasm</keyword>
<keyword id="KW-0418">Kinase</keyword>
<keyword id="KW-0449">Lipoprotein</keyword>
<keyword id="KW-0472">Membrane</keyword>
<keyword id="KW-0496">Mitochondrion</keyword>
<keyword id="KW-0547">Nucleotide-binding</keyword>
<keyword id="KW-0539">Nucleus</keyword>
<keyword id="KW-0564">Palmitate</keyword>
<keyword id="KW-0597">Phosphoprotein</keyword>
<keyword id="KW-1185">Reference proteome</keyword>
<keyword id="KW-0723">Serine/threonine-protein kinase</keyword>
<keyword id="KW-0808">Transferase</keyword>
<feature type="chain" id="PRO_0000186279" description="Mitogen-activated protein kinase 10">
    <location>
        <begin position="1"/>
        <end position="464"/>
    </location>
</feature>
<feature type="domain" description="Protein kinase" evidence="4">
    <location>
        <begin position="64"/>
        <end position="359"/>
    </location>
</feature>
<feature type="region of interest" description="Disordered" evidence="6">
    <location>
        <begin position="405"/>
        <end position="464"/>
    </location>
</feature>
<feature type="short sequence motif" description="TXY">
    <location>
        <begin position="221"/>
        <end position="223"/>
    </location>
</feature>
<feature type="compositionally biased region" description="Low complexity" evidence="6">
    <location>
        <begin position="423"/>
        <end position="432"/>
    </location>
</feature>
<feature type="compositionally biased region" description="Polar residues" evidence="6">
    <location>
        <begin position="433"/>
        <end position="454"/>
    </location>
</feature>
<feature type="active site" description="Proton acceptor" evidence="4 5">
    <location>
        <position position="189"/>
    </location>
</feature>
<feature type="binding site" evidence="4">
    <location>
        <begin position="70"/>
        <end position="78"/>
    </location>
    <ligand>
        <name>ATP</name>
        <dbReference type="ChEBI" id="CHEBI:30616"/>
    </ligand>
</feature>
<feature type="binding site" evidence="4">
    <location>
        <position position="93"/>
    </location>
    <ligand>
        <name>ATP</name>
        <dbReference type="ChEBI" id="CHEBI:30616"/>
    </ligand>
</feature>
<feature type="modified residue" description="Phosphothreonine; by MAP2K7" evidence="2">
    <location>
        <position position="221"/>
    </location>
</feature>
<feature type="modified residue" description="Phosphotyrosine; by MAP2K4" evidence="2">
    <location>
        <position position="223"/>
    </location>
</feature>
<feature type="lipid moiety-binding region" description="S-palmitoyl cysteine" evidence="1">
    <location>
        <position position="462"/>
    </location>
</feature>
<feature type="lipid moiety-binding region" description="S-palmitoyl cysteine" evidence="1">
    <location>
        <position position="463"/>
    </location>
</feature>
<feature type="splice variant" id="VSP_059665" description="In isoform 2.">
    <location>
        <begin position="1"/>
        <end position="38"/>
    </location>
</feature>
<feature type="sequence conflict" description="In Ref. 1; AAA42110." evidence="10" ref="1">
    <original>CG</original>
    <variation>SA</variation>
    <location>
        <begin position="175"/>
        <end position="176"/>
    </location>
</feature>
<proteinExistence type="evidence at protein level"/>
<gene>
    <name type="primary">Mapk10</name>
    <name type="synonym">Jnk3</name>
    <name type="synonym">Prkm10</name>
</gene>
<dbReference type="EC" id="2.7.11.24"/>
<dbReference type="EMBL" id="L27128">
    <property type="protein sequence ID" value="AAA42110.1"/>
    <property type="status" value="ALT_FRAME"/>
    <property type="molecule type" value="mRNA"/>
</dbReference>
<dbReference type="EMBL" id="DQ377224">
    <property type="protein sequence ID" value="ABD24063.1"/>
    <property type="molecule type" value="mRNA"/>
</dbReference>
<dbReference type="EMBL" id="AABR07014301">
    <property type="status" value="NOT_ANNOTATED_CDS"/>
    <property type="molecule type" value="Genomic_DNA"/>
</dbReference>
<dbReference type="EMBL" id="AABR07072369">
    <property type="status" value="NOT_ANNOTATED_CDS"/>
    <property type="molecule type" value="Genomic_DNA"/>
</dbReference>
<dbReference type="EMBL" id="AC141145">
    <property type="status" value="NOT_ANNOTATED_CDS"/>
    <property type="molecule type" value="Genomic_DNA"/>
</dbReference>
<dbReference type="EMBL" id="CH474022">
    <property type="protein sequence ID" value="EDL99527.1"/>
    <property type="molecule type" value="Genomic_DNA"/>
</dbReference>
<dbReference type="PIR" id="S43969">
    <property type="entry name" value="S43969"/>
</dbReference>
<dbReference type="RefSeq" id="NP_036938.2">
    <molecule id="P49187-2"/>
    <property type="nucleotide sequence ID" value="NM_012806.2"/>
</dbReference>
<dbReference type="RefSeq" id="XP_017454572.1">
    <molecule id="P49187-2"/>
    <property type="nucleotide sequence ID" value="XM_017599083.3"/>
</dbReference>
<dbReference type="SMR" id="P49187"/>
<dbReference type="BioGRID" id="247312">
    <property type="interactions" value="1"/>
</dbReference>
<dbReference type="ELM" id="P49187"/>
<dbReference type="FunCoup" id="P49187">
    <property type="interactions" value="2576"/>
</dbReference>
<dbReference type="IntAct" id="P49187">
    <property type="interactions" value="1"/>
</dbReference>
<dbReference type="MINT" id="P49187"/>
<dbReference type="STRING" id="10116.ENSRNOP00000075846"/>
<dbReference type="BindingDB" id="P49187"/>
<dbReference type="ChEMBL" id="CHEMBL4092"/>
<dbReference type="iPTMnet" id="P49187"/>
<dbReference type="PhosphoSitePlus" id="P49187"/>
<dbReference type="SwissPalm" id="P49187"/>
<dbReference type="jPOST" id="P49187"/>
<dbReference type="PaxDb" id="10116-ENSRNOP00000060904"/>
<dbReference type="GeneID" id="25272"/>
<dbReference type="KEGG" id="rno:25272"/>
<dbReference type="AGR" id="RGD:3663"/>
<dbReference type="CTD" id="5602"/>
<dbReference type="RGD" id="3663">
    <property type="gene designation" value="Mapk10"/>
</dbReference>
<dbReference type="VEuPathDB" id="HostDB:ENSRNOG00000002079"/>
<dbReference type="eggNOG" id="KOG0665">
    <property type="taxonomic scope" value="Eukaryota"/>
</dbReference>
<dbReference type="HOGENOM" id="CLU_000288_181_1_1"/>
<dbReference type="InParanoid" id="P49187"/>
<dbReference type="PhylomeDB" id="P49187"/>
<dbReference type="BRENDA" id="2.7.11.24">
    <property type="organism ID" value="5301"/>
</dbReference>
<dbReference type="Reactome" id="R-RNO-2559580">
    <property type="pathway name" value="Oxidative Stress Induced Senescence"/>
</dbReference>
<dbReference type="Reactome" id="R-RNO-2871796">
    <property type="pathway name" value="FCERI mediated MAPK activation"/>
</dbReference>
<dbReference type="Reactome" id="R-RNO-450321">
    <property type="pathway name" value="JNK (c-Jun kinases) phosphorylation and activation mediated by activated human TAK1"/>
</dbReference>
<dbReference type="Reactome" id="R-RNO-450341">
    <property type="pathway name" value="Activation of the AP-1 family of transcription factors"/>
</dbReference>
<dbReference type="PRO" id="PR:P49187"/>
<dbReference type="Proteomes" id="UP000002494">
    <property type="component" value="Chromosome 14"/>
</dbReference>
<dbReference type="Proteomes" id="UP000234681">
    <property type="component" value="Chromosome 14"/>
</dbReference>
<dbReference type="Bgee" id="ENSRNOG00000002079">
    <property type="expression patterns" value="Expressed in frontal cortex and 15 other cell types or tissues"/>
</dbReference>
<dbReference type="ExpressionAtlas" id="P49187">
    <property type="expression patterns" value="baseline and differential"/>
</dbReference>
<dbReference type="GO" id="GO:0005737">
    <property type="term" value="C:cytoplasm"/>
    <property type="evidence" value="ECO:0000250"/>
    <property type="project" value="UniProtKB"/>
</dbReference>
<dbReference type="GO" id="GO:0098978">
    <property type="term" value="C:glutamatergic synapse"/>
    <property type="evidence" value="ECO:0000314"/>
    <property type="project" value="SynGO"/>
</dbReference>
<dbReference type="GO" id="GO:0005739">
    <property type="term" value="C:mitochondrion"/>
    <property type="evidence" value="ECO:0000250"/>
    <property type="project" value="UniProtKB"/>
</dbReference>
<dbReference type="GO" id="GO:0005634">
    <property type="term" value="C:nucleus"/>
    <property type="evidence" value="ECO:0000318"/>
    <property type="project" value="GO_Central"/>
</dbReference>
<dbReference type="GO" id="GO:0043204">
    <property type="term" value="C:perikaryon"/>
    <property type="evidence" value="ECO:0000314"/>
    <property type="project" value="RGD"/>
</dbReference>
<dbReference type="GO" id="GO:0005886">
    <property type="term" value="C:plasma membrane"/>
    <property type="evidence" value="ECO:0000250"/>
    <property type="project" value="UniProtKB"/>
</dbReference>
<dbReference type="GO" id="GO:0014069">
    <property type="term" value="C:postsynaptic density"/>
    <property type="evidence" value="ECO:0000266"/>
    <property type="project" value="RGD"/>
</dbReference>
<dbReference type="GO" id="GO:0150051">
    <property type="term" value="C:postsynaptic Golgi apparatus"/>
    <property type="evidence" value="ECO:0000314"/>
    <property type="project" value="SynGO"/>
</dbReference>
<dbReference type="GO" id="GO:0005524">
    <property type="term" value="F:ATP binding"/>
    <property type="evidence" value="ECO:0000314"/>
    <property type="project" value="RGD"/>
</dbReference>
<dbReference type="GO" id="GO:0004705">
    <property type="term" value="F:JUN kinase activity"/>
    <property type="evidence" value="ECO:0000314"/>
    <property type="project" value="RGD"/>
</dbReference>
<dbReference type="GO" id="GO:0106310">
    <property type="term" value="F:protein serine kinase activity"/>
    <property type="evidence" value="ECO:0007669"/>
    <property type="project" value="RHEA"/>
</dbReference>
<dbReference type="GO" id="GO:0071474">
    <property type="term" value="P:cellular hyperosmotic response"/>
    <property type="evidence" value="ECO:0000270"/>
    <property type="project" value="RGD"/>
</dbReference>
<dbReference type="GO" id="GO:0007254">
    <property type="term" value="P:JNK cascade"/>
    <property type="evidence" value="ECO:0000314"/>
    <property type="project" value="RGD"/>
</dbReference>
<dbReference type="GO" id="GO:0045475">
    <property type="term" value="P:locomotor rhythm"/>
    <property type="evidence" value="ECO:0000250"/>
    <property type="project" value="UniProtKB"/>
</dbReference>
<dbReference type="GO" id="GO:0000122">
    <property type="term" value="P:negative regulation of transcription by RNA polymerase II"/>
    <property type="evidence" value="ECO:0000314"/>
    <property type="project" value="ParkinsonsUK-UCL"/>
</dbReference>
<dbReference type="GO" id="GO:0098969">
    <property type="term" value="P:neurotransmitter receptor transport to postsynaptic membrane"/>
    <property type="evidence" value="ECO:0000314"/>
    <property type="project" value="SynGO"/>
</dbReference>
<dbReference type="GO" id="GO:0042752">
    <property type="term" value="P:regulation of circadian rhythm"/>
    <property type="evidence" value="ECO:0000250"/>
    <property type="project" value="UniProtKB"/>
</dbReference>
<dbReference type="GO" id="GO:0009416">
    <property type="term" value="P:response to light stimulus"/>
    <property type="evidence" value="ECO:0000250"/>
    <property type="project" value="UniProtKB"/>
</dbReference>
<dbReference type="GO" id="GO:0099003">
    <property type="term" value="P:vesicle-mediated transport in synapse"/>
    <property type="evidence" value="ECO:0000314"/>
    <property type="project" value="SynGO"/>
</dbReference>
<dbReference type="CDD" id="cd07850">
    <property type="entry name" value="STKc_JNK"/>
    <property type="match status" value="1"/>
</dbReference>
<dbReference type="FunFam" id="1.10.510.10:FF:000009">
    <property type="entry name" value="Mitogen-activated protein kinase"/>
    <property type="match status" value="1"/>
</dbReference>
<dbReference type="FunFam" id="3.30.200.20:FF:000210">
    <property type="entry name" value="Mitogen-activated protein kinase"/>
    <property type="match status" value="1"/>
</dbReference>
<dbReference type="Gene3D" id="3.30.200.20">
    <property type="entry name" value="Phosphorylase Kinase, domain 1"/>
    <property type="match status" value="1"/>
</dbReference>
<dbReference type="Gene3D" id="1.10.510.10">
    <property type="entry name" value="Transferase(Phosphotransferase) domain 1"/>
    <property type="match status" value="1"/>
</dbReference>
<dbReference type="InterPro" id="IPR011009">
    <property type="entry name" value="Kinase-like_dom_sf"/>
</dbReference>
<dbReference type="InterPro" id="IPR050117">
    <property type="entry name" value="MAP_kinase"/>
</dbReference>
<dbReference type="InterPro" id="IPR003527">
    <property type="entry name" value="MAP_kinase_CS"/>
</dbReference>
<dbReference type="InterPro" id="IPR008351">
    <property type="entry name" value="MAPK_JNK"/>
</dbReference>
<dbReference type="InterPro" id="IPR000719">
    <property type="entry name" value="Prot_kinase_dom"/>
</dbReference>
<dbReference type="InterPro" id="IPR008271">
    <property type="entry name" value="Ser/Thr_kinase_AS"/>
</dbReference>
<dbReference type="PANTHER" id="PTHR24055">
    <property type="entry name" value="MITOGEN-ACTIVATED PROTEIN KINASE"/>
    <property type="match status" value="1"/>
</dbReference>
<dbReference type="Pfam" id="PF00069">
    <property type="entry name" value="Pkinase"/>
    <property type="match status" value="1"/>
</dbReference>
<dbReference type="PRINTS" id="PR01772">
    <property type="entry name" value="JNKMAPKINASE"/>
</dbReference>
<dbReference type="SMART" id="SM00220">
    <property type="entry name" value="S_TKc"/>
    <property type="match status" value="1"/>
</dbReference>
<dbReference type="SUPFAM" id="SSF56112">
    <property type="entry name" value="Protein kinase-like (PK-like)"/>
    <property type="match status" value="1"/>
</dbReference>
<dbReference type="PROSITE" id="PS01351">
    <property type="entry name" value="MAPK"/>
    <property type="match status" value="1"/>
</dbReference>
<dbReference type="PROSITE" id="PS50011">
    <property type="entry name" value="PROTEIN_KINASE_DOM"/>
    <property type="match status" value="1"/>
</dbReference>
<dbReference type="PROSITE" id="PS00108">
    <property type="entry name" value="PROTEIN_KINASE_ST"/>
    <property type="match status" value="1"/>
</dbReference>
<accession>P49187</accession>
<accession>B0VXR6</accession>
<accession>D3ZQ33</accession>